<keyword id="KW-0238">DNA-binding</keyword>
<keyword id="KW-1185">Reference proteome</keyword>
<keyword id="KW-0804">Transcription</keyword>
<keyword id="KW-0805">Transcription regulation</keyword>
<name>YDFH_SHIFL</name>
<reference key="1">
    <citation type="journal article" date="2002" name="Nucleic Acids Res.">
        <title>Genome sequence of Shigella flexneri 2a: insights into pathogenicity through comparison with genomes of Escherichia coli K12 and O157.</title>
        <authorList>
            <person name="Jin Q."/>
            <person name="Yuan Z."/>
            <person name="Xu J."/>
            <person name="Wang Y."/>
            <person name="Shen Y."/>
            <person name="Lu W."/>
            <person name="Wang J."/>
            <person name="Liu H."/>
            <person name="Yang J."/>
            <person name="Yang F."/>
            <person name="Zhang X."/>
            <person name="Zhang J."/>
            <person name="Yang G."/>
            <person name="Wu H."/>
            <person name="Qu D."/>
            <person name="Dong J."/>
            <person name="Sun L."/>
            <person name="Xue Y."/>
            <person name="Zhao A."/>
            <person name="Gao Y."/>
            <person name="Zhu J."/>
            <person name="Kan B."/>
            <person name="Ding K."/>
            <person name="Chen S."/>
            <person name="Cheng H."/>
            <person name="Yao Z."/>
            <person name="He B."/>
            <person name="Chen R."/>
            <person name="Ma D."/>
            <person name="Qiang B."/>
            <person name="Wen Y."/>
            <person name="Hou Y."/>
            <person name="Yu J."/>
        </authorList>
    </citation>
    <scope>NUCLEOTIDE SEQUENCE [LARGE SCALE GENOMIC DNA]</scope>
    <source>
        <strain>301 / Serotype 2a</strain>
    </source>
</reference>
<reference key="2">
    <citation type="journal article" date="2003" name="Infect. Immun.">
        <title>Complete genome sequence and comparative genomics of Shigella flexneri serotype 2a strain 2457T.</title>
        <authorList>
            <person name="Wei J."/>
            <person name="Goldberg M.B."/>
            <person name="Burland V."/>
            <person name="Venkatesan M.M."/>
            <person name="Deng W."/>
            <person name="Fournier G."/>
            <person name="Mayhew G.F."/>
            <person name="Plunkett G. III"/>
            <person name="Rose D.J."/>
            <person name="Darling A."/>
            <person name="Mau B."/>
            <person name="Perna N.T."/>
            <person name="Payne S.M."/>
            <person name="Runyen-Janecky L.J."/>
            <person name="Zhou S."/>
            <person name="Schwartz D.C."/>
            <person name="Blattner F.R."/>
        </authorList>
    </citation>
    <scope>NUCLEOTIDE SEQUENCE [LARGE SCALE GENOMIC DNA]</scope>
    <source>
        <strain>ATCC 700930 / 2457T / Serotype 2a</strain>
    </source>
</reference>
<proteinExistence type="predicted"/>
<dbReference type="EMBL" id="AE005674">
    <property type="protein sequence ID" value="AAN43144.1"/>
    <property type="molecule type" value="Genomic_DNA"/>
</dbReference>
<dbReference type="EMBL" id="AE014073">
    <property type="protein sequence ID" value="AAP17036.1"/>
    <property type="molecule type" value="Genomic_DNA"/>
</dbReference>
<dbReference type="RefSeq" id="WP_000215549.1">
    <property type="nucleotide sequence ID" value="NZ_WPGW01000152.1"/>
</dbReference>
<dbReference type="SMR" id="P0ACM4"/>
<dbReference type="STRING" id="198214.SF1555"/>
<dbReference type="PaxDb" id="198214-SF1555"/>
<dbReference type="GeneID" id="93775704"/>
<dbReference type="KEGG" id="sfx:S1680"/>
<dbReference type="PATRIC" id="fig|623.158.peg.1708"/>
<dbReference type="HOGENOM" id="CLU_017584_5_2_6"/>
<dbReference type="Proteomes" id="UP000001006">
    <property type="component" value="Chromosome"/>
</dbReference>
<dbReference type="Proteomes" id="UP000002673">
    <property type="component" value="Chromosome"/>
</dbReference>
<dbReference type="GO" id="GO:0003677">
    <property type="term" value="F:DNA binding"/>
    <property type="evidence" value="ECO:0007669"/>
    <property type="project" value="UniProtKB-KW"/>
</dbReference>
<dbReference type="GO" id="GO:0003700">
    <property type="term" value="F:DNA-binding transcription factor activity"/>
    <property type="evidence" value="ECO:0007669"/>
    <property type="project" value="InterPro"/>
</dbReference>
<dbReference type="CDD" id="cd07377">
    <property type="entry name" value="WHTH_GntR"/>
    <property type="match status" value="1"/>
</dbReference>
<dbReference type="FunFam" id="1.10.10.10:FF:000127">
    <property type="entry name" value="GntR family transcriptional regulator"/>
    <property type="match status" value="1"/>
</dbReference>
<dbReference type="FunFam" id="1.20.120.530:FF:000005">
    <property type="entry name" value="Transcriptional regulator, GntR family"/>
    <property type="match status" value="1"/>
</dbReference>
<dbReference type="Gene3D" id="1.20.120.530">
    <property type="entry name" value="GntR ligand-binding domain-like"/>
    <property type="match status" value="1"/>
</dbReference>
<dbReference type="Gene3D" id="1.10.10.10">
    <property type="entry name" value="Winged helix-like DNA-binding domain superfamily/Winged helix DNA-binding domain"/>
    <property type="match status" value="1"/>
</dbReference>
<dbReference type="InterPro" id="IPR011711">
    <property type="entry name" value="GntR_C"/>
</dbReference>
<dbReference type="InterPro" id="IPR008920">
    <property type="entry name" value="TF_FadR/GntR_C"/>
</dbReference>
<dbReference type="InterPro" id="IPR000524">
    <property type="entry name" value="Tscrpt_reg_HTH_GntR"/>
</dbReference>
<dbReference type="InterPro" id="IPR036388">
    <property type="entry name" value="WH-like_DNA-bd_sf"/>
</dbReference>
<dbReference type="InterPro" id="IPR036390">
    <property type="entry name" value="WH_DNA-bd_sf"/>
</dbReference>
<dbReference type="PANTHER" id="PTHR43537:SF6">
    <property type="entry name" value="HTH-TYPE TRANSCRIPTIONAL REPRESSOR RSPR"/>
    <property type="match status" value="1"/>
</dbReference>
<dbReference type="PANTHER" id="PTHR43537">
    <property type="entry name" value="TRANSCRIPTIONAL REGULATOR, GNTR FAMILY"/>
    <property type="match status" value="1"/>
</dbReference>
<dbReference type="Pfam" id="PF07729">
    <property type="entry name" value="FCD"/>
    <property type="match status" value="1"/>
</dbReference>
<dbReference type="Pfam" id="PF00392">
    <property type="entry name" value="GntR"/>
    <property type="match status" value="1"/>
</dbReference>
<dbReference type="PRINTS" id="PR00035">
    <property type="entry name" value="HTHGNTR"/>
</dbReference>
<dbReference type="SMART" id="SM00895">
    <property type="entry name" value="FCD"/>
    <property type="match status" value="1"/>
</dbReference>
<dbReference type="SMART" id="SM00345">
    <property type="entry name" value="HTH_GNTR"/>
    <property type="match status" value="1"/>
</dbReference>
<dbReference type="SUPFAM" id="SSF48008">
    <property type="entry name" value="GntR ligand-binding domain-like"/>
    <property type="match status" value="1"/>
</dbReference>
<dbReference type="SUPFAM" id="SSF46785">
    <property type="entry name" value="Winged helix' DNA-binding domain"/>
    <property type="match status" value="1"/>
</dbReference>
<dbReference type="PROSITE" id="PS50949">
    <property type="entry name" value="HTH_GNTR"/>
    <property type="match status" value="1"/>
</dbReference>
<gene>
    <name type="primary">ydfH</name>
    <name type="ordered locus">SF1555</name>
    <name type="ordered locus">S1680</name>
</gene>
<accession>P0ACM4</accession>
<accession>P77577</accession>
<accession>Q83L25</accession>
<sequence>MTVETQLNPTQPVNQQIYRILRRDIVHCLIAPGTPLSEKEVSVRFNVSRQPVREAFIKLAENGLIQIRPQRGSYVNKISMAQVRNGSFIRQAIECAVARRAASMITESQCYQLEQNLHQQRIAIERKQLDDFFELDDNFHQLLTQIADCQLAWDTIENLKATVDRVRYMSFDHVSPPEMLLRQHLDIFSALQKRDGDAVERAMTQHLQEISESVRQIRQENSDWFSEE</sequence>
<feature type="chain" id="PRO_0000050674" description="Uncharacterized HTH-type transcriptional regulator YdfH">
    <location>
        <begin position="1"/>
        <end position="228"/>
    </location>
</feature>
<feature type="domain" description="HTH gntR-type" evidence="1">
    <location>
        <begin position="11"/>
        <end position="78"/>
    </location>
</feature>
<feature type="DNA-binding region" description="H-T-H motif" evidence="1">
    <location>
        <begin position="38"/>
        <end position="57"/>
    </location>
</feature>
<feature type="sequence conflict" description="In Ref. 1." evidence="2" ref="1">
    <original>MTVETQLNPTQPVNQQIYRILR</original>
    <variation>MYSILS</variation>
    <location>
        <begin position="1"/>
        <end position="22"/>
    </location>
</feature>
<organism>
    <name type="scientific">Shigella flexneri</name>
    <dbReference type="NCBI Taxonomy" id="623"/>
    <lineage>
        <taxon>Bacteria</taxon>
        <taxon>Pseudomonadati</taxon>
        <taxon>Pseudomonadota</taxon>
        <taxon>Gammaproteobacteria</taxon>
        <taxon>Enterobacterales</taxon>
        <taxon>Enterobacteriaceae</taxon>
        <taxon>Shigella</taxon>
    </lineage>
</organism>
<protein>
    <recommendedName>
        <fullName>Uncharacterized HTH-type transcriptional regulator YdfH</fullName>
    </recommendedName>
</protein>
<evidence type="ECO:0000255" key="1">
    <source>
        <dbReference type="PROSITE-ProRule" id="PRU00307"/>
    </source>
</evidence>
<evidence type="ECO:0000305" key="2"/>